<gene>
    <name evidence="6" type="primary">Redox2</name>
    <name evidence="7" type="ORF">Caros002920</name>
</gene>
<name>REDX2_CATRO</name>
<dbReference type="EC" id="1.1.1.439" evidence="4"/>
<dbReference type="EMBL" id="MF770510">
    <property type="protein sequence ID" value="AVM85918.1"/>
    <property type="molecule type" value="mRNA"/>
</dbReference>
<dbReference type="SMR" id="A0A2P1GIY9"/>
<dbReference type="KEGG" id="ag:AVM85918"/>
<dbReference type="OrthoDB" id="416253at2759"/>
<dbReference type="BioCyc" id="MetaCyc:MONOMER-20647"/>
<dbReference type="GO" id="GO:0016616">
    <property type="term" value="F:oxidoreductase activity, acting on the CH-OH group of donors, NAD or NADP as acceptor"/>
    <property type="evidence" value="ECO:0007669"/>
    <property type="project" value="InterPro"/>
</dbReference>
<dbReference type="GO" id="GO:0009820">
    <property type="term" value="P:alkaloid metabolic process"/>
    <property type="evidence" value="ECO:0007669"/>
    <property type="project" value="UniProtKB-KW"/>
</dbReference>
<dbReference type="CDD" id="cd19124">
    <property type="entry name" value="AKR_AKR4A_4B"/>
    <property type="match status" value="1"/>
</dbReference>
<dbReference type="FunFam" id="3.20.20.100:FF:000013">
    <property type="entry name" value="NADPH-dependent codeinone reductase 1-1"/>
    <property type="match status" value="1"/>
</dbReference>
<dbReference type="Gene3D" id="3.20.20.100">
    <property type="entry name" value="NADP-dependent oxidoreductase domain"/>
    <property type="match status" value="1"/>
</dbReference>
<dbReference type="InterPro" id="IPR020471">
    <property type="entry name" value="AKR"/>
</dbReference>
<dbReference type="InterPro" id="IPR044497">
    <property type="entry name" value="AKR4A/B"/>
</dbReference>
<dbReference type="InterPro" id="IPR018170">
    <property type="entry name" value="Aldo/ket_reductase_CS"/>
</dbReference>
<dbReference type="InterPro" id="IPR023210">
    <property type="entry name" value="NADP_OxRdtase_dom"/>
</dbReference>
<dbReference type="InterPro" id="IPR036812">
    <property type="entry name" value="NADP_OxRdtase_dom_sf"/>
</dbReference>
<dbReference type="PANTHER" id="PTHR11732">
    <property type="entry name" value="ALDO/KETO REDUCTASE"/>
    <property type="match status" value="1"/>
</dbReference>
<dbReference type="Pfam" id="PF00248">
    <property type="entry name" value="Aldo_ket_red"/>
    <property type="match status" value="1"/>
</dbReference>
<dbReference type="PIRSF" id="PIRSF000097">
    <property type="entry name" value="AKR"/>
    <property type="match status" value="1"/>
</dbReference>
<dbReference type="PRINTS" id="PR00069">
    <property type="entry name" value="ALDKETRDTASE"/>
</dbReference>
<dbReference type="SUPFAM" id="SSF51430">
    <property type="entry name" value="NAD(P)-linked oxidoreductase"/>
    <property type="match status" value="1"/>
</dbReference>
<dbReference type="PROSITE" id="PS00798">
    <property type="entry name" value="ALDOKETO_REDUCTASE_1"/>
    <property type="match status" value="1"/>
</dbReference>
<dbReference type="PROSITE" id="PS00062">
    <property type="entry name" value="ALDOKETO_REDUCTASE_2"/>
    <property type="match status" value="1"/>
</dbReference>
<organism>
    <name type="scientific">Catharanthus roseus</name>
    <name type="common">Madagascar periwinkle</name>
    <name type="synonym">Vinca rosea</name>
    <dbReference type="NCBI Taxonomy" id="4058"/>
    <lineage>
        <taxon>Eukaryota</taxon>
        <taxon>Viridiplantae</taxon>
        <taxon>Streptophyta</taxon>
        <taxon>Embryophyta</taxon>
        <taxon>Tracheophyta</taxon>
        <taxon>Spermatophyta</taxon>
        <taxon>Magnoliopsida</taxon>
        <taxon>eudicotyledons</taxon>
        <taxon>Gunneridae</taxon>
        <taxon>Pentapetalae</taxon>
        <taxon>asterids</taxon>
        <taxon>lamiids</taxon>
        <taxon>Gentianales</taxon>
        <taxon>Apocynaceae</taxon>
        <taxon>Rauvolfioideae</taxon>
        <taxon>Vinceae</taxon>
        <taxon>Catharanthinae</taxon>
        <taxon>Catharanthus</taxon>
    </lineage>
</organism>
<keyword id="KW-0017">Alkaloid metabolism</keyword>
<keyword id="KW-0521">NADP</keyword>
<keyword id="KW-0560">Oxidoreductase</keyword>
<accession>A0A2P1GIY9</accession>
<sequence length="323" mass="36501">MEKQVEIPEVELNSGHKMPIVGYGTCVPEPMPPLEELTAIFLDAIKVGYRHFDTASSYGTEEALGKAIAEAINSGLVKSREEFFISCKLWIEDADHDLILPALNQSLQILGVDYLDLYMIHMPVRVRKGAPMFNYSKEDFLPFDIQGTWKAMEECSKQGLAKSIGVSNYSVEKLTKLLETSTIPPAVNQVEMNVAWQQRKLLPFCKEKNIHITSWSPLLSYGVAWGSNAVMENPVLQQIAASKGKTVAQVALRWIYEQGASLITRTSNKDRMFENVQIFDWELSKEELDQIHEIPQRRGTLGEEFMHPEGPIKSPEELWDGDL</sequence>
<proteinExistence type="evidence at protein level"/>
<protein>
    <recommendedName>
        <fullName evidence="6">Protein REDOX 2</fullName>
        <ecNumber evidence="4">1.1.1.439</ecNumber>
    </recommendedName>
</protein>
<feature type="chain" id="PRO_0000446426" description="Protein REDOX 2">
    <location>
        <begin position="1"/>
        <end position="323"/>
    </location>
</feature>
<feature type="region of interest" description="Disordered" evidence="3">
    <location>
        <begin position="302"/>
        <end position="323"/>
    </location>
</feature>
<feature type="active site" description="Proton donor" evidence="2">
    <location>
        <position position="58"/>
    </location>
</feature>
<feature type="binding site" evidence="2">
    <location>
        <position position="53"/>
    </location>
    <ligand>
        <name>NADP(+)</name>
        <dbReference type="ChEBI" id="CHEBI:58349"/>
    </ligand>
</feature>
<feature type="binding site" evidence="2">
    <location>
        <position position="121"/>
    </location>
    <ligand>
        <name>substrate</name>
    </ligand>
</feature>
<feature type="binding site" evidence="2">
    <location>
        <begin position="167"/>
        <end position="168"/>
    </location>
    <ligand>
        <name>NADP(+)</name>
        <dbReference type="ChEBI" id="CHEBI:58349"/>
    </ligand>
</feature>
<feature type="binding site" evidence="2">
    <location>
        <position position="189"/>
    </location>
    <ligand>
        <name>NADP(+)</name>
        <dbReference type="ChEBI" id="CHEBI:58349"/>
    </ligand>
</feature>
<feature type="binding site" evidence="1">
    <location>
        <begin position="215"/>
        <end position="220"/>
    </location>
    <ligand>
        <name>NADP(+)</name>
        <dbReference type="ChEBI" id="CHEBI:58349"/>
    </ligand>
</feature>
<feature type="binding site" evidence="2">
    <location>
        <begin position="289"/>
        <end position="297"/>
    </location>
    <ligand>
        <name>NADP(+)</name>
        <dbReference type="ChEBI" id="CHEBI:58349"/>
    </ligand>
</feature>
<feature type="site" description="Lowers pKa of active site Tyr" evidence="1">
    <location>
        <position position="88"/>
    </location>
</feature>
<comment type="function">
    <text evidence="4">Component of iboga and aspidosperma monoterpenoid indole alkaloids (MIAs, e.g. tabersonine and catharanthine) biosynthesis pathway from 19E-geissoschizine. Catalyzes the second oxidation step of the unstable intermediate product resulting from the reaction triggered by the geissoschizine oxidase (GO) in the stemmadenine biosynthesis process from 19E-geissoschizine.</text>
</comment>
<comment type="catalytic activity">
    <reaction evidence="4">
        <text>15alpha-stemmadenine + NADP(+) = 17-dehydrostemmadenine + NADPH + 2 H(+)</text>
        <dbReference type="Rhea" id="RHEA:58564"/>
        <dbReference type="ChEBI" id="CHEBI:15378"/>
        <dbReference type="ChEBI" id="CHEBI:57783"/>
        <dbReference type="ChEBI" id="CHEBI:58349"/>
        <dbReference type="ChEBI" id="CHEBI:142667"/>
        <dbReference type="ChEBI" id="CHEBI:142674"/>
        <dbReference type="EC" id="1.1.1.439"/>
    </reaction>
    <physiologicalReaction direction="right-to-left" evidence="4">
        <dbReference type="Rhea" id="RHEA:58566"/>
    </physiologicalReaction>
</comment>
<comment type="pathway">
    <text evidence="4">Alkaloid biosynthesis.</text>
</comment>
<comment type="subunit">
    <text evidence="1">Monomer.</text>
</comment>
<comment type="tissue specificity">
    <text evidence="5">Expressed in leaf epidermis.</text>
</comment>
<comment type="disruption phenotype">
    <text evidence="4">Reduced accumulation of catharanthine and vindoline, but accumulation of 16S- and 16R-deshydroxymethylstemmadenine (16S/16R-DHS) and, to some extent, of akuammicine.</text>
</comment>
<comment type="similarity">
    <text evidence="7">Belongs to the aldo/keto reductase family.</text>
</comment>
<comment type="online information" name="ORCAE database">
    <link uri="https://orcae.psb.ugent.be/taxa/catro/regular/v1/"/>
</comment>
<reference key="1">
    <citation type="journal article" date="2018" name="Proc. Natl. Acad. Sci. U.S.A.">
        <title>Solution of the multistep pathway for assembly of corynanthean, strychnos, iboga, and aspidosperma monoterpenoid indole alkaloids from 19E-geissoschizine.</title>
        <authorList>
            <person name="Qu Y."/>
            <person name="Easson M.E.A.M."/>
            <person name="Simionescu R."/>
            <person name="Hajicek J."/>
            <person name="Thamm A.M.K."/>
            <person name="Salim V."/>
            <person name="De Luca V."/>
        </authorList>
    </citation>
    <scope>NUCLEOTIDE SEQUENCE [MRNA]</scope>
    <scope>FUNCTION</scope>
    <scope>DISRUPTION PHENOTYPE</scope>
    <scope>CATALYTIC ACTIVITY</scope>
    <scope>PATHWAY</scope>
</reference>
<reference key="2">
    <citation type="journal article" date="2019" name="Plant J.">
        <title>Completion of the canonical pathway for assembly of anticancer drugs vincristine/vinblastine in Catharanthus roseus.</title>
        <authorList>
            <person name="Qu Y."/>
            <person name="Safonova O."/>
            <person name="De Luca V."/>
        </authorList>
    </citation>
    <scope>TISSUE SPECIFICITY</scope>
    <source>
        <strain>cv. Little Delicata</strain>
    </source>
</reference>
<evidence type="ECO:0000250" key="1">
    <source>
        <dbReference type="UniProtKB" id="P46336"/>
    </source>
</evidence>
<evidence type="ECO:0000250" key="2">
    <source>
        <dbReference type="UniProtKB" id="Q8CG76"/>
    </source>
</evidence>
<evidence type="ECO:0000256" key="3">
    <source>
        <dbReference type="SAM" id="MobiDB-lite"/>
    </source>
</evidence>
<evidence type="ECO:0000269" key="4">
    <source>
    </source>
</evidence>
<evidence type="ECO:0000269" key="5">
    <source>
    </source>
</evidence>
<evidence type="ECO:0000303" key="6">
    <source>
    </source>
</evidence>
<evidence type="ECO:0000305" key="7"/>